<reference key="1">
    <citation type="journal article" date="2000" name="Virology">
        <title>A novel lipothrixvirus, SIFV, of the extremely thermophilic crenarchaeon Sulfolobus.</title>
        <authorList>
            <person name="Arnold H.P."/>
            <person name="Zillig W."/>
            <person name="Ziese U."/>
            <person name="Holz I."/>
            <person name="Crosby M."/>
            <person name="Utterback T."/>
            <person name="Weidmann J.F."/>
            <person name="Umayam L.A."/>
            <person name="Teffera K."/>
            <person name="Kristjanson J.K."/>
            <person name="Klenk H.P."/>
            <person name="Nelson K.E."/>
            <person name="Fraser C.M."/>
        </authorList>
    </citation>
    <scope>NUCLEOTIDE SEQUENCE [GENOMIC DNA]</scope>
</reference>
<proteinExistence type="predicted"/>
<organismHost>
    <name type="scientific">Saccharolobus islandicus</name>
    <name type="common">Sulfolobus islandicus</name>
    <dbReference type="NCBI Taxonomy" id="43080"/>
</organismHost>
<protein>
    <recommendedName>
        <fullName>Uncharacterized protein 15</fullName>
    </recommendedName>
</protein>
<organism>
    <name type="scientific">Sulfolobus islandicus filamentous virus (isolate Iceland/Hveragerdi)</name>
    <name type="common">SIFV</name>
    <dbReference type="NCBI Taxonomy" id="654908"/>
    <lineage>
        <taxon>Viruses</taxon>
        <taxon>Adnaviria</taxon>
        <taxon>Zilligvirae</taxon>
        <taxon>Taleaviricota</taxon>
        <taxon>Tokiviricetes</taxon>
        <taxon>Ligamenvirales</taxon>
        <taxon>Lipothrixviridae</taxon>
        <taxon>Betalipothrixvirus</taxon>
        <taxon>Sulfolobus islandicus filamentous virus</taxon>
    </lineage>
</organism>
<keyword id="KW-1185">Reference proteome</keyword>
<name>Y015_SIFVH</name>
<sequence>MVDVETVETKYKIILDTQSNYVLMEGRLKVEVRIKGKPIIYEVQEVRNMGYLIDITELDIADTKQRIDSKLCERRYKYVNSLKNLEKFINFVGAEIEVK</sequence>
<dbReference type="EMBL" id="AF440571">
    <property type="protein sequence ID" value="AAL27726.1"/>
    <property type="molecule type" value="Genomic_DNA"/>
</dbReference>
<dbReference type="RefSeq" id="NP_445680.1">
    <property type="nucleotide sequence ID" value="NC_003214.2"/>
</dbReference>
<dbReference type="SMR" id="Q914L5"/>
<dbReference type="GeneID" id="922306"/>
<dbReference type="KEGG" id="vg:922306"/>
<dbReference type="Proteomes" id="UP000007017">
    <property type="component" value="Segment"/>
</dbReference>
<accession>Q914L5</accession>
<feature type="chain" id="PRO_0000385384" description="Uncharacterized protein 15">
    <location>
        <begin position="1"/>
        <end position="99"/>
    </location>
</feature>
<gene>
    <name type="primary">SIFV0015</name>
</gene>